<sequence length="91" mass="10235">MAVKIRLTRLGSKRNPFYRIVVADARSPRDGRIIEQIGTYNPTSANAPEIKVDEALALKWLNDGAKPTDTVHNILSKEGIMKKFDEQKKAK</sequence>
<name>RS16_STAAE</name>
<organism>
    <name type="scientific">Staphylococcus aureus (strain Newman)</name>
    <dbReference type="NCBI Taxonomy" id="426430"/>
    <lineage>
        <taxon>Bacteria</taxon>
        <taxon>Bacillati</taxon>
        <taxon>Bacillota</taxon>
        <taxon>Bacilli</taxon>
        <taxon>Bacillales</taxon>
        <taxon>Staphylococcaceae</taxon>
        <taxon>Staphylococcus</taxon>
    </lineage>
</organism>
<gene>
    <name evidence="1" type="primary">rpsP</name>
    <name type="ordered locus">NWMN_1148</name>
</gene>
<proteinExistence type="inferred from homology"/>
<keyword id="KW-0687">Ribonucleoprotein</keyword>
<keyword id="KW-0689">Ribosomal protein</keyword>
<feature type="chain" id="PRO_1000072199" description="Small ribosomal subunit protein bS16">
    <location>
        <begin position="1"/>
        <end position="91"/>
    </location>
</feature>
<comment type="similarity">
    <text evidence="1">Belongs to the bacterial ribosomal protein bS16 family.</text>
</comment>
<evidence type="ECO:0000255" key="1">
    <source>
        <dbReference type="HAMAP-Rule" id="MF_00385"/>
    </source>
</evidence>
<evidence type="ECO:0000305" key="2"/>
<protein>
    <recommendedName>
        <fullName evidence="1">Small ribosomal subunit protein bS16</fullName>
    </recommendedName>
    <alternativeName>
        <fullName evidence="2">30S ribosomal protein S16</fullName>
    </alternativeName>
</protein>
<accession>A6QGD8</accession>
<dbReference type="EMBL" id="AP009351">
    <property type="protein sequence ID" value="BAF67420.1"/>
    <property type="molecule type" value="Genomic_DNA"/>
</dbReference>
<dbReference type="RefSeq" id="WP_000268754.1">
    <property type="nucleotide sequence ID" value="NZ_JBBIAE010000001.1"/>
</dbReference>
<dbReference type="SMR" id="A6QGD8"/>
<dbReference type="GeneID" id="66839430"/>
<dbReference type="KEGG" id="sae:NWMN_1148"/>
<dbReference type="HOGENOM" id="CLU_100590_5_0_9"/>
<dbReference type="Proteomes" id="UP000006386">
    <property type="component" value="Chromosome"/>
</dbReference>
<dbReference type="GO" id="GO:0005737">
    <property type="term" value="C:cytoplasm"/>
    <property type="evidence" value="ECO:0007669"/>
    <property type="project" value="UniProtKB-ARBA"/>
</dbReference>
<dbReference type="GO" id="GO:0015935">
    <property type="term" value="C:small ribosomal subunit"/>
    <property type="evidence" value="ECO:0007669"/>
    <property type="project" value="TreeGrafter"/>
</dbReference>
<dbReference type="GO" id="GO:0003735">
    <property type="term" value="F:structural constituent of ribosome"/>
    <property type="evidence" value="ECO:0007669"/>
    <property type="project" value="InterPro"/>
</dbReference>
<dbReference type="GO" id="GO:0006412">
    <property type="term" value="P:translation"/>
    <property type="evidence" value="ECO:0007669"/>
    <property type="project" value="UniProtKB-UniRule"/>
</dbReference>
<dbReference type="FunFam" id="3.30.1320.10:FF:000002">
    <property type="entry name" value="30S ribosomal protein S16"/>
    <property type="match status" value="1"/>
</dbReference>
<dbReference type="Gene3D" id="3.30.1320.10">
    <property type="match status" value="1"/>
</dbReference>
<dbReference type="HAMAP" id="MF_00385">
    <property type="entry name" value="Ribosomal_bS16"/>
    <property type="match status" value="1"/>
</dbReference>
<dbReference type="InterPro" id="IPR000307">
    <property type="entry name" value="Ribosomal_bS16"/>
</dbReference>
<dbReference type="InterPro" id="IPR023803">
    <property type="entry name" value="Ribosomal_bS16_dom_sf"/>
</dbReference>
<dbReference type="NCBIfam" id="TIGR00002">
    <property type="entry name" value="S16"/>
    <property type="match status" value="1"/>
</dbReference>
<dbReference type="PANTHER" id="PTHR12919">
    <property type="entry name" value="30S RIBOSOMAL PROTEIN S16"/>
    <property type="match status" value="1"/>
</dbReference>
<dbReference type="PANTHER" id="PTHR12919:SF20">
    <property type="entry name" value="SMALL RIBOSOMAL SUBUNIT PROTEIN BS16M"/>
    <property type="match status" value="1"/>
</dbReference>
<dbReference type="Pfam" id="PF00886">
    <property type="entry name" value="Ribosomal_S16"/>
    <property type="match status" value="1"/>
</dbReference>
<dbReference type="SUPFAM" id="SSF54565">
    <property type="entry name" value="Ribosomal protein S16"/>
    <property type="match status" value="1"/>
</dbReference>
<reference key="1">
    <citation type="journal article" date="2008" name="J. Bacteriol.">
        <title>Genome sequence of Staphylococcus aureus strain Newman and comparative analysis of staphylococcal genomes: polymorphism and evolution of two major pathogenicity islands.</title>
        <authorList>
            <person name="Baba T."/>
            <person name="Bae T."/>
            <person name="Schneewind O."/>
            <person name="Takeuchi F."/>
            <person name="Hiramatsu K."/>
        </authorList>
    </citation>
    <scope>NUCLEOTIDE SEQUENCE [LARGE SCALE GENOMIC DNA]</scope>
    <source>
        <strain>Newman</strain>
    </source>
</reference>